<dbReference type="EC" id="2.8.2.-" evidence="4 5"/>
<dbReference type="EMBL" id="AF033827">
    <property type="protein sequence ID" value="AAC04707.1"/>
    <property type="molecule type" value="mRNA"/>
</dbReference>
<dbReference type="EMBL" id="AF070594">
    <property type="protein sequence ID" value="AAC28651.1"/>
    <property type="molecule type" value="mRNA"/>
</dbReference>
<dbReference type="EMBL" id="AK313241">
    <property type="protein sequence ID" value="BAG36052.1"/>
    <property type="molecule type" value="mRNA"/>
</dbReference>
<dbReference type="EMBL" id="AC012493">
    <property type="protein sequence ID" value="AAX93044.1"/>
    <property type="molecule type" value="Genomic_DNA"/>
</dbReference>
<dbReference type="EMBL" id="CH471127">
    <property type="protein sequence ID" value="EAX01841.1"/>
    <property type="molecule type" value="Genomic_DNA"/>
</dbReference>
<dbReference type="EMBL" id="CH471127">
    <property type="protein sequence ID" value="EAX01842.1"/>
    <property type="molecule type" value="Genomic_DNA"/>
</dbReference>
<dbReference type="EMBL" id="CH471127">
    <property type="protein sequence ID" value="EAX01843.1"/>
    <property type="molecule type" value="Genomic_DNA"/>
</dbReference>
<dbReference type="EMBL" id="CH471127">
    <property type="protein sequence ID" value="EAX01844.1"/>
    <property type="molecule type" value="Genomic_DNA"/>
</dbReference>
<dbReference type="EMBL" id="BC010441">
    <property type="protein sequence ID" value="AAH10441.1"/>
    <property type="molecule type" value="mRNA"/>
</dbReference>
<dbReference type="CCDS" id="CCDS2047.1"/>
<dbReference type="RefSeq" id="NP_004845.1">
    <property type="nucleotide sequence ID" value="NM_004854.5"/>
</dbReference>
<dbReference type="RefSeq" id="XP_011510509.1">
    <property type="nucleotide sequence ID" value="XM_011512207.3"/>
</dbReference>
<dbReference type="RefSeq" id="XP_011510510.1">
    <property type="nucleotide sequence ID" value="XM_011512208.2"/>
</dbReference>
<dbReference type="RefSeq" id="XP_011510512.1">
    <property type="nucleotide sequence ID" value="XM_011512210.2"/>
</dbReference>
<dbReference type="RefSeq" id="XP_011510513.1">
    <property type="nucleotide sequence ID" value="XM_011512211.2"/>
</dbReference>
<dbReference type="RefSeq" id="XP_011510514.1">
    <property type="nucleotide sequence ID" value="XM_011512212.1"/>
</dbReference>
<dbReference type="RefSeq" id="XP_016860869.1">
    <property type="nucleotide sequence ID" value="XM_017005380.3"/>
</dbReference>
<dbReference type="RefSeq" id="XP_016860870.1">
    <property type="nucleotide sequence ID" value="XM_017005381.3"/>
</dbReference>
<dbReference type="RefSeq" id="XP_016860871.1">
    <property type="nucleotide sequence ID" value="XM_017005382.3"/>
</dbReference>
<dbReference type="RefSeq" id="XP_016860872.1">
    <property type="nucleotide sequence ID" value="XM_017005383.3"/>
</dbReference>
<dbReference type="RefSeq" id="XP_024309016.1">
    <property type="nucleotide sequence ID" value="XM_024453248.2"/>
</dbReference>
<dbReference type="RefSeq" id="XP_047302389.1">
    <property type="nucleotide sequence ID" value="XM_047446433.1"/>
</dbReference>
<dbReference type="RefSeq" id="XP_047302390.1">
    <property type="nucleotide sequence ID" value="XM_047446434.1"/>
</dbReference>
<dbReference type="RefSeq" id="XP_047302392.1">
    <property type="nucleotide sequence ID" value="XM_047446436.1"/>
</dbReference>
<dbReference type="RefSeq" id="XP_047302393.1">
    <property type="nucleotide sequence ID" value="XM_047446437.1"/>
</dbReference>
<dbReference type="RefSeq" id="XP_047302394.1">
    <property type="nucleotide sequence ID" value="XM_047446438.1"/>
</dbReference>
<dbReference type="RefSeq" id="XP_054200619.1">
    <property type="nucleotide sequence ID" value="XM_054344644.1"/>
</dbReference>
<dbReference type="RefSeq" id="XP_054200620.1">
    <property type="nucleotide sequence ID" value="XM_054344645.1"/>
</dbReference>
<dbReference type="RefSeq" id="XP_054200621.1">
    <property type="nucleotide sequence ID" value="XM_054344646.1"/>
</dbReference>
<dbReference type="RefSeq" id="XP_054200622.1">
    <property type="nucleotide sequence ID" value="XM_054344647.1"/>
</dbReference>
<dbReference type="RefSeq" id="XP_054200623.1">
    <property type="nucleotide sequence ID" value="XM_054344648.1"/>
</dbReference>
<dbReference type="RefSeq" id="XP_054200624.1">
    <property type="nucleotide sequence ID" value="XM_054344649.1"/>
</dbReference>
<dbReference type="RefSeq" id="XP_054200625.1">
    <property type="nucleotide sequence ID" value="XM_054344650.1"/>
</dbReference>
<dbReference type="RefSeq" id="XP_054200626.1">
    <property type="nucleotide sequence ID" value="XM_054344651.1"/>
</dbReference>
<dbReference type="RefSeq" id="XP_054200627.1">
    <property type="nucleotide sequence ID" value="XM_054344652.1"/>
</dbReference>
<dbReference type="RefSeq" id="XP_054200628.1">
    <property type="nucleotide sequence ID" value="XM_054344653.1"/>
</dbReference>
<dbReference type="RefSeq" id="XP_054200629.1">
    <property type="nucleotide sequence ID" value="XM_054344654.1"/>
</dbReference>
<dbReference type="RefSeq" id="XP_054200630.1">
    <property type="nucleotide sequence ID" value="XM_054344655.1"/>
</dbReference>
<dbReference type="RefSeq" id="XP_054200631.1">
    <property type="nucleotide sequence ID" value="XM_054344656.1"/>
</dbReference>
<dbReference type="RefSeq" id="XP_054200632.1">
    <property type="nucleotide sequence ID" value="XM_054344657.1"/>
</dbReference>
<dbReference type="RefSeq" id="XP_054200633.1">
    <property type="nucleotide sequence ID" value="XM_054344658.1"/>
</dbReference>
<dbReference type="BioGRID" id="114868">
    <property type="interactions" value="55"/>
</dbReference>
<dbReference type="FunCoup" id="O43529">
    <property type="interactions" value="724"/>
</dbReference>
<dbReference type="IntAct" id="O43529">
    <property type="interactions" value="47"/>
</dbReference>
<dbReference type="STRING" id="9606.ENSP00000264249"/>
<dbReference type="GlyCosmos" id="O43529">
    <property type="glycosylation" value="3 sites, No reported glycans"/>
</dbReference>
<dbReference type="GlyGen" id="O43529">
    <property type="glycosylation" value="7 sites, 2 N-linked glycans (2 sites), 1 O-linked glycan (2 sites)"/>
</dbReference>
<dbReference type="iPTMnet" id="O43529"/>
<dbReference type="PhosphoSitePlus" id="O43529"/>
<dbReference type="BioMuta" id="CHST10"/>
<dbReference type="jPOST" id="O43529"/>
<dbReference type="MassIVE" id="O43529"/>
<dbReference type="PaxDb" id="9606-ENSP00000264249"/>
<dbReference type="PeptideAtlas" id="O43529"/>
<dbReference type="ProteomicsDB" id="49037"/>
<dbReference type="Antibodypedia" id="2360">
    <property type="antibodies" value="191 antibodies from 28 providers"/>
</dbReference>
<dbReference type="DNASU" id="9486"/>
<dbReference type="Ensembl" id="ENST00000264249.8">
    <property type="protein sequence ID" value="ENSP00000264249.3"/>
    <property type="gene ID" value="ENSG00000115526.11"/>
</dbReference>
<dbReference type="Ensembl" id="ENST00000409701.5">
    <property type="protein sequence ID" value="ENSP00000387309.1"/>
    <property type="gene ID" value="ENSG00000115526.11"/>
</dbReference>
<dbReference type="GeneID" id="9486"/>
<dbReference type="KEGG" id="hsa:9486"/>
<dbReference type="MANE-Select" id="ENST00000264249.8">
    <property type="protein sequence ID" value="ENSP00000264249.3"/>
    <property type="RefSeq nucleotide sequence ID" value="NM_004854.5"/>
    <property type="RefSeq protein sequence ID" value="NP_004845.1"/>
</dbReference>
<dbReference type="UCSC" id="uc002tam.4">
    <property type="organism name" value="human"/>
</dbReference>
<dbReference type="AGR" id="HGNC:19650"/>
<dbReference type="CTD" id="9486"/>
<dbReference type="DisGeNET" id="9486"/>
<dbReference type="GeneCards" id="CHST10"/>
<dbReference type="HGNC" id="HGNC:19650">
    <property type="gene designation" value="CHST10"/>
</dbReference>
<dbReference type="HPA" id="ENSG00000115526">
    <property type="expression patterns" value="Low tissue specificity"/>
</dbReference>
<dbReference type="MIM" id="606376">
    <property type="type" value="gene"/>
</dbReference>
<dbReference type="neXtProt" id="NX_O43529"/>
<dbReference type="OpenTargets" id="ENSG00000115526"/>
<dbReference type="PharmGKB" id="PA134920179"/>
<dbReference type="VEuPathDB" id="HostDB:ENSG00000115526"/>
<dbReference type="eggNOG" id="KOG4651">
    <property type="taxonomic scope" value="Eukaryota"/>
</dbReference>
<dbReference type="GeneTree" id="ENSGT00940000157128"/>
<dbReference type="HOGENOM" id="CLU_043398_2_0_1"/>
<dbReference type="InParanoid" id="O43529"/>
<dbReference type="OMA" id="HWPEEFQ"/>
<dbReference type="OrthoDB" id="2019940at2759"/>
<dbReference type="PAN-GO" id="O43529">
    <property type="GO annotations" value="2 GO annotations based on evolutionary models"/>
</dbReference>
<dbReference type="PhylomeDB" id="O43529"/>
<dbReference type="TreeFam" id="TF325581"/>
<dbReference type="PathwayCommons" id="O43529"/>
<dbReference type="Reactome" id="R-HSA-975578">
    <property type="pathway name" value="Reactions specific to the complex N-glycan synthesis pathway"/>
</dbReference>
<dbReference type="SignaLink" id="O43529"/>
<dbReference type="UniPathway" id="UPA00353"/>
<dbReference type="BioGRID-ORCS" id="9486">
    <property type="hits" value="11 hits in 1150 CRISPR screens"/>
</dbReference>
<dbReference type="ChiTaRS" id="CHST10">
    <property type="organism name" value="human"/>
</dbReference>
<dbReference type="GeneWiki" id="CHST10"/>
<dbReference type="GenomeRNAi" id="9486"/>
<dbReference type="Pharos" id="O43529">
    <property type="development level" value="Tbio"/>
</dbReference>
<dbReference type="PRO" id="PR:O43529"/>
<dbReference type="Proteomes" id="UP000005640">
    <property type="component" value="Chromosome 2"/>
</dbReference>
<dbReference type="RNAct" id="O43529">
    <property type="molecule type" value="protein"/>
</dbReference>
<dbReference type="Bgee" id="ENSG00000115526">
    <property type="expression patterns" value="Expressed in ventricular zone and 154 other cell types or tissues"/>
</dbReference>
<dbReference type="ExpressionAtlas" id="O43529">
    <property type="expression patterns" value="baseline and differential"/>
</dbReference>
<dbReference type="GO" id="GO:0005794">
    <property type="term" value="C:Golgi apparatus"/>
    <property type="evidence" value="ECO:0000304"/>
    <property type="project" value="ProtInc"/>
</dbReference>
<dbReference type="GO" id="GO:0000139">
    <property type="term" value="C:Golgi membrane"/>
    <property type="evidence" value="ECO:0000250"/>
    <property type="project" value="UniProtKB"/>
</dbReference>
<dbReference type="GO" id="GO:0016020">
    <property type="term" value="C:membrane"/>
    <property type="evidence" value="ECO:0000304"/>
    <property type="project" value="ProtInc"/>
</dbReference>
<dbReference type="GO" id="GO:0016232">
    <property type="term" value="F:HNK-1 sulfotransferase activity"/>
    <property type="evidence" value="ECO:0000304"/>
    <property type="project" value="Reactome"/>
</dbReference>
<dbReference type="GO" id="GO:0008146">
    <property type="term" value="F:sulfotransferase activity"/>
    <property type="evidence" value="ECO:0000314"/>
    <property type="project" value="UniProtKB"/>
</dbReference>
<dbReference type="GO" id="GO:0008209">
    <property type="term" value="P:androgen metabolic process"/>
    <property type="evidence" value="ECO:0000314"/>
    <property type="project" value="UniProtKB"/>
</dbReference>
<dbReference type="GO" id="GO:0016051">
    <property type="term" value="P:carbohydrate biosynthetic process"/>
    <property type="evidence" value="ECO:0007669"/>
    <property type="project" value="InterPro"/>
</dbReference>
<dbReference type="GO" id="GO:0007155">
    <property type="term" value="P:cell adhesion"/>
    <property type="evidence" value="ECO:0000304"/>
    <property type="project" value="ProtInc"/>
</dbReference>
<dbReference type="GO" id="GO:0008210">
    <property type="term" value="P:estrogen metabolic process"/>
    <property type="evidence" value="ECO:0000314"/>
    <property type="project" value="UniProtKB"/>
</dbReference>
<dbReference type="GO" id="GO:0007612">
    <property type="term" value="P:learning"/>
    <property type="evidence" value="ECO:0007669"/>
    <property type="project" value="Ensembl"/>
</dbReference>
<dbReference type="GO" id="GO:0007616">
    <property type="term" value="P:long-term memory"/>
    <property type="evidence" value="ECO:0007669"/>
    <property type="project" value="Ensembl"/>
</dbReference>
<dbReference type="GO" id="GO:0030166">
    <property type="term" value="P:proteoglycan biosynthetic process"/>
    <property type="evidence" value="ECO:0000318"/>
    <property type="project" value="GO_Central"/>
</dbReference>
<dbReference type="InterPro" id="IPR018011">
    <property type="entry name" value="Carb_sulfotrans_8-10"/>
</dbReference>
<dbReference type="InterPro" id="IPR005331">
    <property type="entry name" value="Sulfotransferase"/>
</dbReference>
<dbReference type="PANTHER" id="PTHR12137">
    <property type="entry name" value="CARBOHYDRATE SULFOTRANSFERASE"/>
    <property type="match status" value="1"/>
</dbReference>
<dbReference type="PANTHER" id="PTHR12137:SF2">
    <property type="entry name" value="CARBOHYDRATE SULFOTRANSFERASE 10"/>
    <property type="match status" value="1"/>
</dbReference>
<dbReference type="Pfam" id="PF03567">
    <property type="entry name" value="Sulfotransfer_2"/>
    <property type="match status" value="1"/>
</dbReference>
<protein>
    <recommendedName>
        <fullName>Carbohydrate sulfotransferase 10</fullName>
        <ecNumber evidence="4 5">2.8.2.-</ecNumber>
    </recommendedName>
    <alternativeName>
        <fullName>HNK-1 sulfotransferase</fullName>
        <shortName>HNK-1ST</shortName>
        <shortName evidence="8">HNK1ST</shortName>
        <shortName>HuHNK-1ST</shortName>
    </alternativeName>
</protein>
<feature type="chain" id="PRO_0000189657" description="Carbohydrate sulfotransferase 10">
    <location>
        <begin position="1"/>
        <end position="356"/>
    </location>
</feature>
<feature type="topological domain" description="Cytoplasmic" evidence="2">
    <location>
        <begin position="1"/>
        <end position="6"/>
    </location>
</feature>
<feature type="transmembrane region" description="Helical; Signal-anchor for type II membrane protein" evidence="2">
    <location>
        <begin position="7"/>
        <end position="27"/>
    </location>
</feature>
<feature type="topological domain" description="Lumenal" evidence="2">
    <location>
        <begin position="28"/>
        <end position="356"/>
    </location>
</feature>
<feature type="binding site" evidence="9">
    <location>
        <begin position="127"/>
        <end position="133"/>
    </location>
    <ligand>
        <name>3'-phosphoadenylyl sulfate</name>
        <dbReference type="ChEBI" id="CHEBI:58339"/>
    </ligand>
</feature>
<feature type="binding site" evidence="9">
    <location>
        <begin position="189"/>
        <end position="197"/>
    </location>
    <ligand>
        <name>3'-phosphoadenylyl sulfate</name>
        <dbReference type="ChEBI" id="CHEBI:58339"/>
    </ligand>
</feature>
<feature type="glycosylation site" description="N-linked (GlcNAc...) asparagine" evidence="2">
    <location>
        <position position="99"/>
    </location>
</feature>
<feature type="glycosylation site" description="N-linked (GlcNAc...) asparagine" evidence="2">
    <location>
        <position position="228"/>
    </location>
</feature>
<feature type="glycosylation site" description="N-linked (GlcNAc...) asparagine" evidence="2">
    <location>
        <position position="316"/>
    </location>
</feature>
<feature type="sequence variant" id="VAR_033737" description="In dbSNP:rs35177621.">
    <original>V</original>
    <variation>L</variation>
    <location>
        <position position="20"/>
    </location>
</feature>
<feature type="sequence variant" id="VAR_021470" description="In dbSNP:rs3748932.">
    <original>D</original>
    <variation>N</variation>
    <location>
        <position position="258"/>
    </location>
</feature>
<feature type="mutagenesis site" description="Loss of function." evidence="3">
    <original>K</original>
    <variation>A</variation>
    <location>
        <position position="128"/>
    </location>
</feature>
<feature type="mutagenesis site" description="Induces a reduction in enzyme activity." evidence="3">
    <original>K</original>
    <variation>R</variation>
    <location>
        <position position="128"/>
    </location>
</feature>
<feature type="mutagenesis site" description="Loss of function." evidence="3">
    <original>R</original>
    <variation>A</variation>
    <variation>K</variation>
    <location>
        <position position="189"/>
    </location>
</feature>
<feature type="mutagenesis site" description="Loss of function." evidence="3">
    <original>D</original>
    <variation>A</variation>
    <location>
        <position position="190"/>
    </location>
</feature>
<feature type="mutagenesis site" description="Induces a mild reduction in enzyme activity." evidence="3">
    <original>D</original>
    <variation>E</variation>
    <location>
        <position position="190"/>
    </location>
</feature>
<feature type="mutagenesis site" description="Loss of function." evidence="3">
    <original>P</original>
    <variation>A</variation>
    <variation>G</variation>
    <location>
        <position position="191"/>
    </location>
</feature>
<feature type="mutagenesis site" description="Loss of function." evidence="3">
    <original>S</original>
    <variation>A</variation>
    <variation>T</variation>
    <location>
        <position position="197"/>
    </location>
</feature>
<reference key="1">
    <citation type="journal article" date="1998" name="J. Biol. Chem.">
        <title>Expression cloning of a human sulfotransferase that directs the synthesis of the HNK-1 glycan on the neural cell adhesion molecule and glycolipids.</title>
        <authorList>
            <person name="Ong E."/>
            <person name="Yeh J.-C."/>
            <person name="Ding Y."/>
            <person name="Hindsgaul O."/>
            <person name="Fukuda M."/>
        </authorList>
    </citation>
    <scope>NUCLEOTIDE SEQUENCE [MRNA]</scope>
    <scope>FUNCTION</scope>
    <scope>ENZYME ACTIVITY</scope>
    <scope>TISSUE SPECIFICITY</scope>
    <source>
        <tissue>Brain</tissue>
    </source>
</reference>
<reference key="2">
    <citation type="submission" date="1998-06" db="EMBL/GenBank/DDBJ databases">
        <authorList>
            <person name="Yu W."/>
            <person name="Gibbs R.A."/>
        </authorList>
    </citation>
    <scope>NUCLEOTIDE SEQUENCE [LARGE SCALE MRNA]</scope>
    <source>
        <tissue>Brain</tissue>
    </source>
</reference>
<reference key="3">
    <citation type="journal article" date="2004" name="Nat. Genet.">
        <title>Complete sequencing and characterization of 21,243 full-length human cDNAs.</title>
        <authorList>
            <person name="Ota T."/>
            <person name="Suzuki Y."/>
            <person name="Nishikawa T."/>
            <person name="Otsuki T."/>
            <person name="Sugiyama T."/>
            <person name="Irie R."/>
            <person name="Wakamatsu A."/>
            <person name="Hayashi K."/>
            <person name="Sato H."/>
            <person name="Nagai K."/>
            <person name="Kimura K."/>
            <person name="Makita H."/>
            <person name="Sekine M."/>
            <person name="Obayashi M."/>
            <person name="Nishi T."/>
            <person name="Shibahara T."/>
            <person name="Tanaka T."/>
            <person name="Ishii S."/>
            <person name="Yamamoto J."/>
            <person name="Saito K."/>
            <person name="Kawai Y."/>
            <person name="Isono Y."/>
            <person name="Nakamura Y."/>
            <person name="Nagahari K."/>
            <person name="Murakami K."/>
            <person name="Yasuda T."/>
            <person name="Iwayanagi T."/>
            <person name="Wagatsuma M."/>
            <person name="Shiratori A."/>
            <person name="Sudo H."/>
            <person name="Hosoiri T."/>
            <person name="Kaku Y."/>
            <person name="Kodaira H."/>
            <person name="Kondo H."/>
            <person name="Sugawara M."/>
            <person name="Takahashi M."/>
            <person name="Kanda K."/>
            <person name="Yokoi T."/>
            <person name="Furuya T."/>
            <person name="Kikkawa E."/>
            <person name="Omura Y."/>
            <person name="Abe K."/>
            <person name="Kamihara K."/>
            <person name="Katsuta N."/>
            <person name="Sato K."/>
            <person name="Tanikawa M."/>
            <person name="Yamazaki M."/>
            <person name="Ninomiya K."/>
            <person name="Ishibashi T."/>
            <person name="Yamashita H."/>
            <person name="Murakawa K."/>
            <person name="Fujimori K."/>
            <person name="Tanai H."/>
            <person name="Kimata M."/>
            <person name="Watanabe M."/>
            <person name="Hiraoka S."/>
            <person name="Chiba Y."/>
            <person name="Ishida S."/>
            <person name="Ono Y."/>
            <person name="Takiguchi S."/>
            <person name="Watanabe S."/>
            <person name="Yosida M."/>
            <person name="Hotuta T."/>
            <person name="Kusano J."/>
            <person name="Kanehori K."/>
            <person name="Takahashi-Fujii A."/>
            <person name="Hara H."/>
            <person name="Tanase T.-O."/>
            <person name="Nomura Y."/>
            <person name="Togiya S."/>
            <person name="Komai F."/>
            <person name="Hara R."/>
            <person name="Takeuchi K."/>
            <person name="Arita M."/>
            <person name="Imose N."/>
            <person name="Musashino K."/>
            <person name="Yuuki H."/>
            <person name="Oshima A."/>
            <person name="Sasaki N."/>
            <person name="Aotsuka S."/>
            <person name="Yoshikawa Y."/>
            <person name="Matsunawa H."/>
            <person name="Ichihara T."/>
            <person name="Shiohata N."/>
            <person name="Sano S."/>
            <person name="Moriya S."/>
            <person name="Momiyama H."/>
            <person name="Satoh N."/>
            <person name="Takami S."/>
            <person name="Terashima Y."/>
            <person name="Suzuki O."/>
            <person name="Nakagawa S."/>
            <person name="Senoh A."/>
            <person name="Mizoguchi H."/>
            <person name="Goto Y."/>
            <person name="Shimizu F."/>
            <person name="Wakebe H."/>
            <person name="Hishigaki H."/>
            <person name="Watanabe T."/>
            <person name="Sugiyama A."/>
            <person name="Takemoto M."/>
            <person name="Kawakami B."/>
            <person name="Yamazaki M."/>
            <person name="Watanabe K."/>
            <person name="Kumagai A."/>
            <person name="Itakura S."/>
            <person name="Fukuzumi Y."/>
            <person name="Fujimori Y."/>
            <person name="Komiyama M."/>
            <person name="Tashiro H."/>
            <person name="Tanigami A."/>
            <person name="Fujiwara T."/>
            <person name="Ono T."/>
            <person name="Yamada K."/>
            <person name="Fujii Y."/>
            <person name="Ozaki K."/>
            <person name="Hirao M."/>
            <person name="Ohmori Y."/>
            <person name="Kawabata A."/>
            <person name="Hikiji T."/>
            <person name="Kobatake N."/>
            <person name="Inagaki H."/>
            <person name="Ikema Y."/>
            <person name="Okamoto S."/>
            <person name="Okitani R."/>
            <person name="Kawakami T."/>
            <person name="Noguchi S."/>
            <person name="Itoh T."/>
            <person name="Shigeta K."/>
            <person name="Senba T."/>
            <person name="Matsumura K."/>
            <person name="Nakajima Y."/>
            <person name="Mizuno T."/>
            <person name="Morinaga M."/>
            <person name="Sasaki M."/>
            <person name="Togashi T."/>
            <person name="Oyama M."/>
            <person name="Hata H."/>
            <person name="Watanabe M."/>
            <person name="Komatsu T."/>
            <person name="Mizushima-Sugano J."/>
            <person name="Satoh T."/>
            <person name="Shirai Y."/>
            <person name="Takahashi Y."/>
            <person name="Nakagawa K."/>
            <person name="Okumura K."/>
            <person name="Nagase T."/>
            <person name="Nomura N."/>
            <person name="Kikuchi H."/>
            <person name="Masuho Y."/>
            <person name="Yamashita R."/>
            <person name="Nakai K."/>
            <person name="Yada T."/>
            <person name="Nakamura Y."/>
            <person name="Ohara O."/>
            <person name="Isogai T."/>
            <person name="Sugano S."/>
        </authorList>
    </citation>
    <scope>NUCLEOTIDE SEQUENCE [LARGE SCALE MRNA]</scope>
    <source>
        <tissue>Brain</tissue>
    </source>
</reference>
<reference key="4">
    <citation type="journal article" date="2005" name="Nature">
        <title>Generation and annotation of the DNA sequences of human chromosomes 2 and 4.</title>
        <authorList>
            <person name="Hillier L.W."/>
            <person name="Graves T.A."/>
            <person name="Fulton R.S."/>
            <person name="Fulton L.A."/>
            <person name="Pepin K.H."/>
            <person name="Minx P."/>
            <person name="Wagner-McPherson C."/>
            <person name="Layman D."/>
            <person name="Wylie K."/>
            <person name="Sekhon M."/>
            <person name="Becker M.C."/>
            <person name="Fewell G.A."/>
            <person name="Delehaunty K.D."/>
            <person name="Miner T.L."/>
            <person name="Nash W.E."/>
            <person name="Kremitzki C."/>
            <person name="Oddy L."/>
            <person name="Du H."/>
            <person name="Sun H."/>
            <person name="Bradshaw-Cordum H."/>
            <person name="Ali J."/>
            <person name="Carter J."/>
            <person name="Cordes M."/>
            <person name="Harris A."/>
            <person name="Isak A."/>
            <person name="van Brunt A."/>
            <person name="Nguyen C."/>
            <person name="Du F."/>
            <person name="Courtney L."/>
            <person name="Kalicki J."/>
            <person name="Ozersky P."/>
            <person name="Abbott S."/>
            <person name="Armstrong J."/>
            <person name="Belter E.A."/>
            <person name="Caruso L."/>
            <person name="Cedroni M."/>
            <person name="Cotton M."/>
            <person name="Davidson T."/>
            <person name="Desai A."/>
            <person name="Elliott G."/>
            <person name="Erb T."/>
            <person name="Fronick C."/>
            <person name="Gaige T."/>
            <person name="Haakenson W."/>
            <person name="Haglund K."/>
            <person name="Holmes A."/>
            <person name="Harkins R."/>
            <person name="Kim K."/>
            <person name="Kruchowski S.S."/>
            <person name="Strong C.M."/>
            <person name="Grewal N."/>
            <person name="Goyea E."/>
            <person name="Hou S."/>
            <person name="Levy A."/>
            <person name="Martinka S."/>
            <person name="Mead K."/>
            <person name="McLellan M.D."/>
            <person name="Meyer R."/>
            <person name="Randall-Maher J."/>
            <person name="Tomlinson C."/>
            <person name="Dauphin-Kohlberg S."/>
            <person name="Kozlowicz-Reilly A."/>
            <person name="Shah N."/>
            <person name="Swearengen-Shahid S."/>
            <person name="Snider J."/>
            <person name="Strong J.T."/>
            <person name="Thompson J."/>
            <person name="Yoakum M."/>
            <person name="Leonard S."/>
            <person name="Pearman C."/>
            <person name="Trani L."/>
            <person name="Radionenko M."/>
            <person name="Waligorski J.E."/>
            <person name="Wang C."/>
            <person name="Rock S.M."/>
            <person name="Tin-Wollam A.-M."/>
            <person name="Maupin R."/>
            <person name="Latreille P."/>
            <person name="Wendl M.C."/>
            <person name="Yang S.-P."/>
            <person name="Pohl C."/>
            <person name="Wallis J.W."/>
            <person name="Spieth J."/>
            <person name="Bieri T.A."/>
            <person name="Berkowicz N."/>
            <person name="Nelson J.O."/>
            <person name="Osborne J."/>
            <person name="Ding L."/>
            <person name="Meyer R."/>
            <person name="Sabo A."/>
            <person name="Shotland Y."/>
            <person name="Sinha P."/>
            <person name="Wohldmann P.E."/>
            <person name="Cook L.L."/>
            <person name="Hickenbotham M.T."/>
            <person name="Eldred J."/>
            <person name="Williams D."/>
            <person name="Jones T.A."/>
            <person name="She X."/>
            <person name="Ciccarelli F.D."/>
            <person name="Izaurralde E."/>
            <person name="Taylor J."/>
            <person name="Schmutz J."/>
            <person name="Myers R.M."/>
            <person name="Cox D.R."/>
            <person name="Huang X."/>
            <person name="McPherson J.D."/>
            <person name="Mardis E.R."/>
            <person name="Clifton S.W."/>
            <person name="Warren W.C."/>
            <person name="Chinwalla A.T."/>
            <person name="Eddy S.R."/>
            <person name="Marra M.A."/>
            <person name="Ovcharenko I."/>
            <person name="Furey T.S."/>
            <person name="Miller W."/>
            <person name="Eichler E.E."/>
            <person name="Bork P."/>
            <person name="Suyama M."/>
            <person name="Torrents D."/>
            <person name="Waterston R.H."/>
            <person name="Wilson R.K."/>
        </authorList>
    </citation>
    <scope>NUCLEOTIDE SEQUENCE [LARGE SCALE GENOMIC DNA]</scope>
</reference>
<reference key="5">
    <citation type="submission" date="2005-09" db="EMBL/GenBank/DDBJ databases">
        <authorList>
            <person name="Mural R.J."/>
            <person name="Istrail S."/>
            <person name="Sutton G."/>
            <person name="Florea L."/>
            <person name="Halpern A.L."/>
            <person name="Mobarry C.M."/>
            <person name="Lippert R."/>
            <person name="Walenz B."/>
            <person name="Shatkay H."/>
            <person name="Dew I."/>
            <person name="Miller J.R."/>
            <person name="Flanigan M.J."/>
            <person name="Edwards N.J."/>
            <person name="Bolanos R."/>
            <person name="Fasulo D."/>
            <person name="Halldorsson B.V."/>
            <person name="Hannenhalli S."/>
            <person name="Turner R."/>
            <person name="Yooseph S."/>
            <person name="Lu F."/>
            <person name="Nusskern D.R."/>
            <person name="Shue B.C."/>
            <person name="Zheng X.H."/>
            <person name="Zhong F."/>
            <person name="Delcher A.L."/>
            <person name="Huson D.H."/>
            <person name="Kravitz S.A."/>
            <person name="Mouchard L."/>
            <person name="Reinert K."/>
            <person name="Remington K.A."/>
            <person name="Clark A.G."/>
            <person name="Waterman M.S."/>
            <person name="Eichler E.E."/>
            <person name="Adams M.D."/>
            <person name="Hunkapiller M.W."/>
            <person name="Myers E.W."/>
            <person name="Venter J.C."/>
        </authorList>
    </citation>
    <scope>NUCLEOTIDE SEQUENCE [LARGE SCALE GENOMIC DNA]</scope>
</reference>
<reference key="6">
    <citation type="journal article" date="2004" name="Genome Res.">
        <title>The status, quality, and expansion of the NIH full-length cDNA project: the Mammalian Gene Collection (MGC).</title>
        <authorList>
            <consortium name="The MGC Project Team"/>
        </authorList>
    </citation>
    <scope>NUCLEOTIDE SEQUENCE [LARGE SCALE MRNA]</scope>
    <source>
        <tissue>Brain</tissue>
    </source>
</reference>
<reference key="7">
    <citation type="journal article" date="1999" name="J. Biol. Chem.">
        <title>Structure and function of HNK-1 sulfotransferase. Identification of donor and acceptor binding sites by site-directed mutagenesis.</title>
        <authorList>
            <person name="Ong E."/>
            <person name="Yeh J.-C."/>
            <person name="Ding Y."/>
            <person name="Hindsgaul O."/>
            <person name="Pedersen L.C."/>
            <person name="Negishi M."/>
            <person name="Fukuda M."/>
        </authorList>
    </citation>
    <scope>MUTAGENESIS OF LYS-128; ARG-189; ASP-190; PRO-191 AND SER-197</scope>
</reference>
<reference key="8">
    <citation type="journal article" date="2013" name="J. Biol. Chem.">
        <title>In vivo regulation of steroid hormones by the Chst10 sulfotransferase in mouse.</title>
        <authorList>
            <person name="Suzuki-Anekoji M."/>
            <person name="Suzuki A."/>
            <person name="Wu S.W."/>
            <person name="Angata K."/>
            <person name="Murai K.K."/>
            <person name="Sugihara K."/>
            <person name="Akama T.O."/>
            <person name="Khoo K.H."/>
            <person name="Nakayama J."/>
            <person name="Fukuda M.N."/>
            <person name="Fukuda M."/>
        </authorList>
    </citation>
    <scope>FUNCTION</scope>
    <scope>CATALYTIC ACTIVITY</scope>
    <scope>BIOPHYSICOCHEMICAL PROPERTIES</scope>
    <scope>PATHWAY</scope>
</reference>
<reference key="9">
    <citation type="journal article" date="2020" name="Glycobiology">
        <title>HNK-1 sulfotransferase modulates alpha-dystroglycan glycosylation by 3-O-sulfation of glucuronic acid on matriglycan.</title>
        <authorList>
            <person name="Sheikh M.O."/>
            <person name="Venzke D."/>
            <person name="Anderson M.E."/>
            <person name="Yoshida-Moriguchi T."/>
            <person name="Glushka J.N."/>
            <person name="Nairn A.V."/>
            <person name="Galizzi M."/>
            <person name="Moremen K.W."/>
            <person name="Campbell K.P."/>
            <person name="Wells L."/>
        </authorList>
    </citation>
    <scope>FUNCTION</scope>
    <scope>CATALYTIC ACTIVITY</scope>
    <scope>PATHWAY</scope>
    <scope>TISSUE SPECIFICITY</scope>
</reference>
<organism>
    <name type="scientific">Homo sapiens</name>
    <name type="common">Human</name>
    <dbReference type="NCBI Taxonomy" id="9606"/>
    <lineage>
        <taxon>Eukaryota</taxon>
        <taxon>Metazoa</taxon>
        <taxon>Chordata</taxon>
        <taxon>Craniata</taxon>
        <taxon>Vertebrata</taxon>
        <taxon>Euteleostomi</taxon>
        <taxon>Mammalia</taxon>
        <taxon>Eutheria</taxon>
        <taxon>Euarchontoglires</taxon>
        <taxon>Primates</taxon>
        <taxon>Haplorrhini</taxon>
        <taxon>Catarrhini</taxon>
        <taxon>Hominidae</taxon>
        <taxon>Homo</taxon>
    </lineage>
</organism>
<accession>O43529</accession>
<accession>Q53T18</accession>
<proteinExistence type="evidence at protein level"/>
<keyword id="KW-0119">Carbohydrate metabolism</keyword>
<keyword id="KW-0325">Glycoprotein</keyword>
<keyword id="KW-0333">Golgi apparatus</keyword>
<keyword id="KW-0443">Lipid metabolism</keyword>
<keyword id="KW-0472">Membrane</keyword>
<keyword id="KW-1267">Proteomics identification</keyword>
<keyword id="KW-1185">Reference proteome</keyword>
<keyword id="KW-0735">Signal-anchor</keyword>
<keyword id="KW-0753">Steroid metabolism</keyword>
<keyword id="KW-0808">Transferase</keyword>
<keyword id="KW-0812">Transmembrane</keyword>
<keyword id="KW-1133">Transmembrane helix</keyword>
<evidence type="ECO:0000250" key="1">
    <source>
        <dbReference type="UniProtKB" id="O54702"/>
    </source>
</evidence>
<evidence type="ECO:0000255" key="2"/>
<evidence type="ECO:0000269" key="3">
    <source>
    </source>
</evidence>
<evidence type="ECO:0000269" key="4">
    <source>
    </source>
</evidence>
<evidence type="ECO:0000269" key="5">
    <source>
    </source>
</evidence>
<evidence type="ECO:0000269" key="6">
    <source>
    </source>
</evidence>
<evidence type="ECO:0000303" key="7">
    <source>
    </source>
</evidence>
<evidence type="ECO:0000303" key="8">
    <source>
    </source>
</evidence>
<evidence type="ECO:0000305" key="9"/>
<evidence type="ECO:0000305" key="10">
    <source>
    </source>
</evidence>
<evidence type="ECO:0000305" key="11">
    <source>
    </source>
</evidence>
<evidence type="ECO:0000312" key="12">
    <source>
        <dbReference type="HGNC" id="HGNC:19650"/>
    </source>
</evidence>
<name>CHSTA_HUMAN</name>
<sequence>MHHQWLLLAACFWVIFMFMVASKFITLTFKDPDVYSAKQEFLFLTTMPEVRKLPEEKHIPEELKPTGKELPDSQLVQPLVYMERLELIRNVCRDDALKNLSHTPVSKFVLDRIFVCDKHKILFCQTPKVGNTQWKKVLIVLNGAFSSIEEIPENVVHDHEKNGLPRLSSFSDAEIQKRLKTYFKFFIVRDPFERLISAFKDKFVHNPRFEPWYRHEIAPGIIRKYRRNRTETRGIQFEDFVRYLGDPNHRWLDLQFGDHIIHWVTYVELCAPCEIMYSVIGHHETLEDDAPYILKEAGIDHLVSYPTIPPGITVYNRTKVEHYFLGISKRDIRRLYARFEGDFKLFGYQKPDFLLN</sequence>
<gene>
    <name evidence="7 12" type="primary">CHST10</name>
</gene>
<comment type="function">
    <text evidence="4 5 6">Catalyzes the transfer of sulfate from 3'-phosphoadenylyl sulfate (PAPS) to position 3 of terminal glucuronic acid of both protein- and lipid-linked oligosaccharides. Participates in biosynthesis of HNK-1 carbohydrate structure 3-O-sulfo-beta-D-GlcA-(1-&gt;3)-beta-D-Gal-(1-&gt;4)-D-GlcNAc-R, a sulfated glucuronyl-lactosaminyl residue carried by many neural recognition molecules, which is involved in cell interactions during ontogenetic development and in synaptic plasticity in the adult. May be indirectly involved in synapse plasticity of the hippocampus, via its role in HNK-1 biosynthesis (PubMed:9478973). Sulfates terminal glucuronyl residue of the laminin globular (LG)-domain binding epitope on DAG1/alpha-dystroglycan and prevents further polymerization by LARGE1 glycosyltransferase. Likely defines the chain length of LG epitope, conferring binding specificity to extracellular matrix components (PubMed:32149355). Plays a role in down-regulating the steroid hormones. Sulfates glucuronidated estrogens and androgens with an impact in hormone cycle and fertility. Has a preference for glucuronyl moiety at the 3-hydroxyl group of a sterol ring rather than the 17-hydroxyl group, showing high catalytic efficiency for 17beta-estradiol 3-O-(beta-D-glucuronate) and dehydroepiandrosterone 3-O-(beta-D-glucuronate) hormones (PubMed:23269668).</text>
</comment>
<comment type="catalytic activity">
    <reaction evidence="5">
        <text>3-O-{beta-D-GlcA-(1-&gt;[3)-alpha-D-Xyl-(1-&gt;3)-beta-D-GlcA-(1-&gt;](n)-4)-beta-D-Xyl-(1-&gt;4)-Rib-ol-P-Rib-ol-P-3-beta-D-GalNAc-(1-&gt;3)-beta-D-GlcNAc-(1-&gt;4)-O-6-P-alpha-D-Man}-L-Thr-[protein] + 3'-phosphoadenylyl sulfate = 3-O-{O-3-S-beta-D-GlcA-(1-&gt;[3)-alpha-D-Xyl-(1-&gt;3)-beta-D-GlcA-(1-&gt;](n)-4)-beta-D-Xyl-(1-&gt;4)-Rib-ol-P-Rib-ol-P-3-beta-D-GalNAc-(1-&gt;3)-beta-D-GlcNAc-(1-&gt;4)-O-6-P-alpha-D-Man}-L-Thr-[protein] + adenosine 3',5'-bisphosphate + H(+)</text>
        <dbReference type="Rhea" id="RHEA:68304"/>
        <dbReference type="Rhea" id="RHEA-COMP:17486"/>
        <dbReference type="Rhea" id="RHEA-COMP:17487"/>
        <dbReference type="ChEBI" id="CHEBI:15378"/>
        <dbReference type="ChEBI" id="CHEBI:58339"/>
        <dbReference type="ChEBI" id="CHEBI:58343"/>
        <dbReference type="ChEBI" id="CHEBI:177355"/>
        <dbReference type="ChEBI" id="CHEBI:177363"/>
    </reaction>
    <physiologicalReaction direction="left-to-right" evidence="11">
        <dbReference type="Rhea" id="RHEA:68305"/>
    </physiologicalReaction>
</comment>
<comment type="catalytic activity">
    <reaction evidence="4">
        <text>17beta-estradiol 3-O-(beta-D-glucuronate) + 3'-phosphoadenylyl sulfate = 17beta-estradiol 3-O-(3-sulfo-beta-D-glucuronate) + adenosine 3',5'-bisphosphate + H(+)</text>
        <dbReference type="Rhea" id="RHEA:68696"/>
        <dbReference type="ChEBI" id="CHEBI:15378"/>
        <dbReference type="ChEBI" id="CHEBI:58339"/>
        <dbReference type="ChEBI" id="CHEBI:58343"/>
        <dbReference type="ChEBI" id="CHEBI:136641"/>
        <dbReference type="ChEBI" id="CHEBI:178093"/>
    </reaction>
    <physiologicalReaction direction="left-to-right" evidence="10">
        <dbReference type="Rhea" id="RHEA:68697"/>
    </physiologicalReaction>
</comment>
<comment type="catalytic activity">
    <reaction evidence="4">
        <text>17beta-estradiol 3-O-(beta-D-glucuronate) 17-sulfate + 3'-phosphoadenylyl sulfate = 17beta-estradiol 3-O-(3-sulfo-beta-D-glucuronate) 17-sulfate + adenosine 3',5'-bisphosphate + H(+)</text>
        <dbReference type="Rhea" id="RHEA:68660"/>
        <dbReference type="ChEBI" id="CHEBI:15378"/>
        <dbReference type="ChEBI" id="CHEBI:58339"/>
        <dbReference type="ChEBI" id="CHEBI:58343"/>
        <dbReference type="ChEBI" id="CHEBI:178094"/>
        <dbReference type="ChEBI" id="CHEBI:178095"/>
    </reaction>
    <physiologicalReaction direction="left-to-right" evidence="10">
        <dbReference type="Rhea" id="RHEA:68661"/>
    </physiologicalReaction>
</comment>
<comment type="catalytic activity">
    <reaction evidence="4">
        <text>17beta-estradiol 17-O-(beta-D-glucuronate) + 3'-phosphoadenylyl sulfate = 17beta-estradiol 17-O-(3-sulfo-beta-D-glucuronate) + adenosine 3',5'-bisphosphate + H(+)</text>
        <dbReference type="Rhea" id="RHEA:68664"/>
        <dbReference type="ChEBI" id="CHEBI:15378"/>
        <dbReference type="ChEBI" id="CHEBI:58339"/>
        <dbReference type="ChEBI" id="CHEBI:58343"/>
        <dbReference type="ChEBI" id="CHEBI:82961"/>
        <dbReference type="ChEBI" id="CHEBI:178096"/>
    </reaction>
    <physiologicalReaction direction="left-to-right" evidence="10">
        <dbReference type="Rhea" id="RHEA:68665"/>
    </physiologicalReaction>
</comment>
<comment type="catalytic activity">
    <reaction evidence="4">
        <text>16alpha,17beta-estriol 3-O-(beta-D-glucuronate) + 3'-phosphoadenylyl sulfate = 16alpha,17beta-estriol 3-O-(3-sulfo-beta-D-glucuronate) + adenosine 3',5'-bisphosphate + H(+)</text>
        <dbReference type="Rhea" id="RHEA:68668"/>
        <dbReference type="ChEBI" id="CHEBI:15378"/>
        <dbReference type="ChEBI" id="CHEBI:58339"/>
        <dbReference type="ChEBI" id="CHEBI:58343"/>
        <dbReference type="ChEBI" id="CHEBI:136649"/>
        <dbReference type="ChEBI" id="CHEBI:178097"/>
    </reaction>
    <physiologicalReaction direction="left-to-right" evidence="10">
        <dbReference type="Rhea" id="RHEA:68669"/>
    </physiologicalReaction>
</comment>
<comment type="catalytic activity">
    <reaction evidence="4">
        <text>16alpha,17beta-estriol 16-O-(beta-D-glucuronate) + 3'-phosphoadenylyl sulfate = 16alpha,17beta-estriol 16-O-(3-sulfo-beta-D-glucuronate) + adenosine 3',5'-bisphosphate + H(+)</text>
        <dbReference type="Rhea" id="RHEA:68672"/>
        <dbReference type="ChEBI" id="CHEBI:15378"/>
        <dbReference type="ChEBI" id="CHEBI:58339"/>
        <dbReference type="ChEBI" id="CHEBI:58343"/>
        <dbReference type="ChEBI" id="CHEBI:136650"/>
        <dbReference type="ChEBI" id="CHEBI:178098"/>
    </reaction>
    <physiologicalReaction direction="left-to-right" evidence="10">
        <dbReference type="Rhea" id="RHEA:68673"/>
    </physiologicalReaction>
</comment>
<comment type="catalytic activity">
    <reaction evidence="4">
        <text>16alpha,17beta-estriol 17-O-(beta-D-glucuronate) + 3'-phosphoadenylyl sulfate = 16alpha,17beta-estriol 17-O-(3-sulfo-beta-D-glucuronate) + adenosine 3',5'-bisphosphate + H(+)</text>
        <dbReference type="Rhea" id="RHEA:68700"/>
        <dbReference type="ChEBI" id="CHEBI:15378"/>
        <dbReference type="ChEBI" id="CHEBI:58339"/>
        <dbReference type="ChEBI" id="CHEBI:58343"/>
        <dbReference type="ChEBI" id="CHEBI:178099"/>
        <dbReference type="ChEBI" id="CHEBI:178100"/>
    </reaction>
    <physiologicalReaction direction="left-to-right" evidence="10">
        <dbReference type="Rhea" id="RHEA:68701"/>
    </physiologicalReaction>
</comment>
<comment type="catalytic activity">
    <reaction evidence="4">
        <text>estrone 3-O-(beta-D-glucuronate) + 3'-phosphoadenylyl sulfate = estrone 3-O-(3-sulfo-beta-D-glucuronate) + adenosine 3',5'-bisphosphate + H(+)</text>
        <dbReference type="Rhea" id="RHEA:68676"/>
        <dbReference type="ChEBI" id="CHEBI:15378"/>
        <dbReference type="ChEBI" id="CHEBI:58339"/>
        <dbReference type="ChEBI" id="CHEBI:58343"/>
        <dbReference type="ChEBI" id="CHEBI:136634"/>
        <dbReference type="ChEBI" id="CHEBI:178101"/>
    </reaction>
    <physiologicalReaction direction="left-to-right" evidence="10">
        <dbReference type="Rhea" id="RHEA:68677"/>
    </physiologicalReaction>
</comment>
<comment type="catalytic activity">
    <reaction evidence="4">
        <text>3alpha,20alpha-dihydroxy-5beta-pregnane 3-O-(beta-D-glucuronate) + 3'-phosphoadenylyl sulfate = 3alpha,20alpha-dihydroxy-5beta-pregnane 3-O-(3-sulfo-beta-D-glucuronate) + adenosine 3',5'-bisphosphate + H(+)</text>
        <dbReference type="Rhea" id="RHEA:68680"/>
        <dbReference type="ChEBI" id="CHEBI:15378"/>
        <dbReference type="ChEBI" id="CHEBI:58339"/>
        <dbReference type="ChEBI" id="CHEBI:58343"/>
        <dbReference type="ChEBI" id="CHEBI:178102"/>
        <dbReference type="ChEBI" id="CHEBI:178103"/>
    </reaction>
    <physiologicalReaction direction="left-to-right" evidence="10">
        <dbReference type="Rhea" id="RHEA:68681"/>
    </physiologicalReaction>
</comment>
<comment type="catalytic activity">
    <reaction evidence="4">
        <text>testosterone 17-O-(beta-D-glucuronate) + 3'-phosphoadenylyl sulfate = testosterone 17-O-(3-sulfo-beta-D-glucuronate) + adenosine 3',5'-bisphosphate + H(+)</text>
        <dbReference type="Rhea" id="RHEA:68684"/>
        <dbReference type="ChEBI" id="CHEBI:15378"/>
        <dbReference type="ChEBI" id="CHEBI:58339"/>
        <dbReference type="ChEBI" id="CHEBI:58343"/>
        <dbReference type="ChEBI" id="CHEBI:136639"/>
        <dbReference type="ChEBI" id="CHEBI:178104"/>
    </reaction>
    <physiologicalReaction direction="left-to-right" evidence="10">
        <dbReference type="Rhea" id="RHEA:68685"/>
    </physiologicalReaction>
</comment>
<comment type="catalytic activity">
    <reaction evidence="4">
        <text>3beta-androst-5-en-17-one 3-O-(beta-D-glucuronate) + 3'-phosphoadenylyl sulfate = 3beta-androst-5-en-17-one 3-O-(3-sulfo-beta-D-glucuronate) + adenosine 3',5'-bisphosphate + H(+)</text>
        <dbReference type="Rhea" id="RHEA:68688"/>
        <dbReference type="ChEBI" id="CHEBI:15378"/>
        <dbReference type="ChEBI" id="CHEBI:58339"/>
        <dbReference type="ChEBI" id="CHEBI:58343"/>
        <dbReference type="ChEBI" id="CHEBI:178105"/>
        <dbReference type="ChEBI" id="CHEBI:178106"/>
    </reaction>
    <physiologicalReaction direction="left-to-right" evidence="10">
        <dbReference type="Rhea" id="RHEA:68689"/>
    </physiologicalReaction>
</comment>
<comment type="catalytic activity">
    <reaction evidence="4">
        <text>3alpha,17alpha-dihydroxy-5beta-androstane-11-one-17beta-carboxylate 3-O-(beta-D-glucuronate) + 3'-phosphoadenylyl sulfate = 3alpha,17alpha-dihydroxy-5beta-androstane-11-one-17beta-carboxylate 3-O-(3-sulfo-beta-D-glucuronate) + adenosine 3',5'-bisphosphate + H(+)</text>
        <dbReference type="Rhea" id="RHEA:68692"/>
        <dbReference type="ChEBI" id="CHEBI:15378"/>
        <dbReference type="ChEBI" id="CHEBI:58339"/>
        <dbReference type="ChEBI" id="CHEBI:58343"/>
        <dbReference type="ChEBI" id="CHEBI:178107"/>
        <dbReference type="ChEBI" id="CHEBI:178108"/>
    </reaction>
    <physiologicalReaction direction="left-to-right" evidence="10">
        <dbReference type="Rhea" id="RHEA:68693"/>
    </physiologicalReaction>
</comment>
<comment type="catalytic activity">
    <reaction evidence="4">
        <text>3alpha-hydroxyetiocholan-17-one 3-O-(beta-D-glucuronate) + 3'-phosphoadenylyl sulfate = 3alpha-hydroxyetiocholan-17-one 3-O-(3-sulfo-beta-D-glucuronate) + adenosine 3',5'-bisphosphate + H(+)</text>
        <dbReference type="Rhea" id="RHEA:68704"/>
        <dbReference type="ChEBI" id="CHEBI:15378"/>
        <dbReference type="ChEBI" id="CHEBI:58339"/>
        <dbReference type="ChEBI" id="CHEBI:58343"/>
        <dbReference type="ChEBI" id="CHEBI:178197"/>
        <dbReference type="ChEBI" id="CHEBI:178198"/>
    </reaction>
    <physiologicalReaction direction="left-to-right" evidence="10">
        <dbReference type="Rhea" id="RHEA:68705"/>
    </physiologicalReaction>
</comment>
<comment type="biophysicochemical properties">
    <kinetics>
        <KM evidence="4">0.21 mM for dehydroepiandrosterone 3-O-(beta-D-glucuronate) (GlcUA-3-DHEA)</KM>
        <KM evidence="4">0.321 mM for 17beta-estradiol 3-O-(beta-D-glucuronate) (GlcUA-3-E2)</KM>
        <KM evidence="4">1.518 mM for N-acetyllactosamine 3-O-(beta-D-glucuronate) (GlcUA-3-LacNAc)</KM>
        <Vmax evidence="4">3194.0 pmol/min/mg enzyme toward dehydroepiandrosterone 3-O-(beta-D-glucuronate) (GlcUA-3-DHEA)</Vmax>
        <Vmax evidence="4">3858.0 pmol/min/mg enzyme toward 17beta-estradiol 3-O-(beta-D-glucuronate) (GlcUA-3-E2)</Vmax>
        <Vmax evidence="4">1723.0 pmol/min/mg enzyme toward N-acetyllactosamine 3-O-(beta-D-glucuronate) (GlcUA-3-LacNAc)</Vmax>
    </kinetics>
</comment>
<comment type="pathway">
    <text evidence="4">Steroid metabolism.</text>
</comment>
<comment type="pathway">
    <text evidence="5">Protein modification; carbohydrate sulfation.</text>
</comment>
<comment type="subcellular location">
    <subcellularLocation>
        <location evidence="1">Golgi apparatus membrane</location>
        <topology evidence="2">Single-pass type II membrane protein</topology>
    </subcellularLocation>
</comment>
<comment type="tissue specificity">
    <text evidence="5 6">In fetal tissues, it is predominantly expressed in brain, and weakly expressed in lung, kidney and liver. In adult, it is highly expressed in brain, testis, ovary, expressed at intermediate level in heart, pancreas, skeletal muscle, spleen and thymus, and weakly expressed in other tissues. In brain, it is expressed at higher level in the frontal lobe.</text>
</comment>
<comment type="similarity">
    <text evidence="9">Belongs to the sulfotransferase 2 family.</text>
</comment>